<proteinExistence type="inferred from homology"/>
<comment type="function">
    <text evidence="1">Plays a central role in virus morphogenesis and assembly. Acts as a viroporin and self-assembles in host membranes forming pentameric protein-lipid pores that allow ion transport. Also plays a role in the induction of apoptosis.</text>
</comment>
<comment type="subunit">
    <text evidence="1">Homopentamer. Interacts with membrane protein M in the budding compartment of the host cell, which is located between endoplasmic reticulum and the Golgi complex. Interacts with Nucleoprotein.</text>
</comment>
<comment type="subcellular location">
    <subcellularLocation>
        <location evidence="1">Host Golgi apparatus membrane</location>
        <topology evidence="1">Single-pass type III membrane protein</topology>
    </subcellularLocation>
    <text evidence="1">The cytoplasmic tail functions as a Golgi complex-targeting signal.</text>
</comment>
<comment type="similarity">
    <text evidence="1">Belongs to the betacoronaviruses E protein family.</text>
</comment>
<dbReference type="EMBL" id="AF058943">
    <property type="protein sequence ID" value="AAF25513.1"/>
    <property type="molecule type" value="Genomic_RNA"/>
</dbReference>
<dbReference type="RefSeq" id="NP_150081.1">
    <property type="nucleotide sequence ID" value="NC_003045.1"/>
</dbReference>
<dbReference type="GeneID" id="921685"/>
<dbReference type="KEGG" id="vg:921685"/>
<dbReference type="GO" id="GO:0044178">
    <property type="term" value="C:host cell Golgi membrane"/>
    <property type="evidence" value="ECO:0007669"/>
    <property type="project" value="UniProtKB-SubCell"/>
</dbReference>
<dbReference type="GO" id="GO:0016020">
    <property type="term" value="C:membrane"/>
    <property type="evidence" value="ECO:0007669"/>
    <property type="project" value="UniProtKB-UniRule"/>
</dbReference>
<dbReference type="GO" id="GO:0140975">
    <property type="term" value="P:disruption of cellular anatomical structure in another organism"/>
    <property type="evidence" value="ECO:0007669"/>
    <property type="project" value="UniProtKB-UniRule"/>
</dbReference>
<dbReference type="GO" id="GO:0046760">
    <property type="term" value="P:viral budding from Golgi membrane"/>
    <property type="evidence" value="ECO:0007669"/>
    <property type="project" value="UniProtKB-UniRule"/>
</dbReference>
<dbReference type="CDD" id="cd21532">
    <property type="entry name" value="HKU1-CoV-like_E"/>
    <property type="match status" value="1"/>
</dbReference>
<dbReference type="HAMAP" id="MF_04204">
    <property type="entry name" value="BETA_CORONA_E"/>
    <property type="match status" value="1"/>
</dbReference>
<dbReference type="InterPro" id="IPR043506">
    <property type="entry name" value="E_protein_bCoV"/>
</dbReference>
<dbReference type="InterPro" id="IPR003873">
    <property type="entry name" value="E_protein_CoV"/>
</dbReference>
<dbReference type="Pfam" id="PF02723">
    <property type="entry name" value="CoV_E"/>
    <property type="match status" value="1"/>
</dbReference>
<dbReference type="PROSITE" id="PS51926">
    <property type="entry name" value="COV_E"/>
    <property type="match status" value="1"/>
</dbReference>
<sequence length="84" mass="9584">MFMADAYFADTVWYVGQIIFIVAICLLVIIVVVAFLATFKLCIQLCGMCNTLVLSPSIYVFNRGRQFYEFYNDVKPPVLDVDDV</sequence>
<accession>P0C2Q2</accession>
<accession>Q77WX9</accession>
<reference key="1">
    <citation type="journal article" date="1998" name="Virus Genes">
        <title>Nucleotide and predicted amino acid sequences of all genes encoded by the 3' genomic portion (9.5 kb) of respiratory bovine coronaviruses and comparisons among respiratory and enteric coronaviruses.</title>
        <authorList>
            <person name="Chouljenko V.N."/>
            <person name="Kousoulas K.G."/>
            <person name="Lin X.Q."/>
            <person name="Storz J."/>
        </authorList>
    </citation>
    <scope>NUCLEOTIDE SEQUENCE [GENOMIC RNA]</scope>
    <source>
        <strain>Isolate LSU-94LSS-051-2</strain>
    </source>
</reference>
<name>VEMP_CVBLS</name>
<protein>
    <recommendedName>
        <fullName evidence="1">Envelope small membrane protein</fullName>
        <shortName evidence="1">E protein</shortName>
        <shortName evidence="1">sM protein</shortName>
    </recommendedName>
</protein>
<gene>
    <name evidence="1" type="primary">E</name>
    <name type="synonym">sM</name>
    <name type="ORF">5b</name>
</gene>
<keyword id="KW-0053">Apoptosis</keyword>
<keyword id="KW-1040">Host Golgi apparatus</keyword>
<keyword id="KW-1043">Host membrane</keyword>
<keyword id="KW-0472">Membrane</keyword>
<keyword id="KW-0812">Transmembrane</keyword>
<keyword id="KW-1133">Transmembrane helix</keyword>
<evidence type="ECO:0000255" key="1">
    <source>
        <dbReference type="HAMAP-Rule" id="MF_04204"/>
    </source>
</evidence>
<organismHost>
    <name type="scientific">Bos taurus</name>
    <name type="common">Bovine</name>
    <dbReference type="NCBI Taxonomy" id="9913"/>
</organismHost>
<organism>
    <name type="scientific">Bovine coronavirus (strain LSU-94LSS-051)</name>
    <name type="common">BCoV-LSU</name>
    <name type="synonym">BCV</name>
    <dbReference type="NCBI Taxonomy" id="233261"/>
    <lineage>
        <taxon>Viruses</taxon>
        <taxon>Riboviria</taxon>
        <taxon>Orthornavirae</taxon>
        <taxon>Pisuviricota</taxon>
        <taxon>Pisoniviricetes</taxon>
        <taxon>Nidovirales</taxon>
        <taxon>Cornidovirineae</taxon>
        <taxon>Coronaviridae</taxon>
        <taxon>Orthocoronavirinae</taxon>
        <taxon>Betacoronavirus</taxon>
        <taxon>Embecovirus</taxon>
        <taxon>Betacoronavirus 1</taxon>
    </lineage>
</organism>
<feature type="chain" id="PRO_0000283968" description="Envelope small membrane protein">
    <location>
        <begin position="1"/>
        <end position="84"/>
    </location>
</feature>
<feature type="topological domain" description="Virion surface" evidence="1">
    <location>
        <begin position="1"/>
        <end position="18"/>
    </location>
</feature>
<feature type="transmembrane region" description="Helical" evidence="1">
    <location>
        <begin position="19"/>
        <end position="39"/>
    </location>
</feature>
<feature type="topological domain" description="Intravirion" evidence="1">
    <location>
        <begin position="40"/>
        <end position="80"/>
    </location>
</feature>